<keyword id="KW-0378">Hydrolase</keyword>
<keyword id="KW-0511">Multifunctional enzyme</keyword>
<keyword id="KW-0658">Purine biosynthesis</keyword>
<keyword id="KW-0808">Transferase</keyword>
<feature type="chain" id="PRO_1000018871" description="Bifunctional purine biosynthesis protein PurH">
    <location>
        <begin position="1"/>
        <end position="524"/>
    </location>
</feature>
<feature type="domain" description="MGS-like" evidence="2">
    <location>
        <begin position="1"/>
        <end position="149"/>
    </location>
</feature>
<comment type="catalytic activity">
    <reaction evidence="1">
        <text>(6R)-10-formyltetrahydrofolate + 5-amino-1-(5-phospho-beta-D-ribosyl)imidazole-4-carboxamide = 5-formamido-1-(5-phospho-D-ribosyl)imidazole-4-carboxamide + (6S)-5,6,7,8-tetrahydrofolate</text>
        <dbReference type="Rhea" id="RHEA:22192"/>
        <dbReference type="ChEBI" id="CHEBI:57453"/>
        <dbReference type="ChEBI" id="CHEBI:58467"/>
        <dbReference type="ChEBI" id="CHEBI:58475"/>
        <dbReference type="ChEBI" id="CHEBI:195366"/>
        <dbReference type="EC" id="2.1.2.3"/>
    </reaction>
</comment>
<comment type="catalytic activity">
    <reaction evidence="1">
        <text>IMP + H2O = 5-formamido-1-(5-phospho-D-ribosyl)imidazole-4-carboxamide</text>
        <dbReference type="Rhea" id="RHEA:18445"/>
        <dbReference type="ChEBI" id="CHEBI:15377"/>
        <dbReference type="ChEBI" id="CHEBI:58053"/>
        <dbReference type="ChEBI" id="CHEBI:58467"/>
        <dbReference type="EC" id="3.5.4.10"/>
    </reaction>
</comment>
<comment type="pathway">
    <text evidence="1">Purine metabolism; IMP biosynthesis via de novo pathway; 5-formamido-1-(5-phospho-D-ribosyl)imidazole-4-carboxamide from 5-amino-1-(5-phospho-D-ribosyl)imidazole-4-carboxamide (10-formyl THF route): step 1/1.</text>
</comment>
<comment type="pathway">
    <text evidence="1">Purine metabolism; IMP biosynthesis via de novo pathway; IMP from 5-formamido-1-(5-phospho-D-ribosyl)imidazole-4-carboxamide: step 1/1.</text>
</comment>
<comment type="domain">
    <text evidence="1">The IMP cyclohydrolase activity resides in the N-terminal region.</text>
</comment>
<comment type="similarity">
    <text evidence="1">Belongs to the PurH family.</text>
</comment>
<evidence type="ECO:0000255" key="1">
    <source>
        <dbReference type="HAMAP-Rule" id="MF_00139"/>
    </source>
</evidence>
<evidence type="ECO:0000255" key="2">
    <source>
        <dbReference type="PROSITE-ProRule" id="PRU01202"/>
    </source>
</evidence>
<gene>
    <name evidence="1" type="primary">purH</name>
    <name type="ordered locus">Cag_0258</name>
</gene>
<reference key="1">
    <citation type="submission" date="2005-08" db="EMBL/GenBank/DDBJ databases">
        <title>Complete sequence of Chlorobium chlorochromatii CaD3.</title>
        <authorList>
            <consortium name="US DOE Joint Genome Institute"/>
            <person name="Copeland A."/>
            <person name="Lucas S."/>
            <person name="Lapidus A."/>
            <person name="Barry K."/>
            <person name="Detter J.C."/>
            <person name="Glavina T."/>
            <person name="Hammon N."/>
            <person name="Israni S."/>
            <person name="Pitluck S."/>
            <person name="Bryant D."/>
            <person name="Schmutz J."/>
            <person name="Larimer F."/>
            <person name="Land M."/>
            <person name="Kyrpides N."/>
            <person name="Ivanova N."/>
            <person name="Richardson P."/>
        </authorList>
    </citation>
    <scope>NUCLEOTIDE SEQUENCE [LARGE SCALE GENOMIC DNA]</scope>
    <source>
        <strain>CaD3</strain>
    </source>
</reference>
<protein>
    <recommendedName>
        <fullName evidence="1">Bifunctional purine biosynthesis protein PurH</fullName>
    </recommendedName>
    <domain>
        <recommendedName>
            <fullName evidence="1">Phosphoribosylaminoimidazolecarboxamide formyltransferase</fullName>
            <ecNumber evidence="1">2.1.2.3</ecNumber>
        </recommendedName>
        <alternativeName>
            <fullName evidence="1">AICAR transformylase</fullName>
        </alternativeName>
    </domain>
    <domain>
        <recommendedName>
            <fullName evidence="1">IMP cyclohydrolase</fullName>
            <ecNumber evidence="1">3.5.4.10</ecNumber>
        </recommendedName>
        <alternativeName>
            <fullName evidence="1">ATIC</fullName>
        </alternativeName>
        <alternativeName>
            <fullName evidence="1">IMP synthase</fullName>
        </alternativeName>
        <alternativeName>
            <fullName evidence="1">Inosinicase</fullName>
        </alternativeName>
    </domain>
</protein>
<proteinExistence type="inferred from homology"/>
<dbReference type="EC" id="2.1.2.3" evidence="1"/>
<dbReference type="EC" id="3.5.4.10" evidence="1"/>
<dbReference type="EMBL" id="CP000108">
    <property type="protein sequence ID" value="ABB27534.1"/>
    <property type="molecule type" value="Genomic_DNA"/>
</dbReference>
<dbReference type="SMR" id="Q3ATZ1"/>
<dbReference type="STRING" id="340177.Cag_0258"/>
<dbReference type="KEGG" id="cch:Cag_0258"/>
<dbReference type="eggNOG" id="COG0138">
    <property type="taxonomic scope" value="Bacteria"/>
</dbReference>
<dbReference type="HOGENOM" id="CLU_016316_5_2_10"/>
<dbReference type="OrthoDB" id="9802065at2"/>
<dbReference type="UniPathway" id="UPA00074">
    <property type="reaction ID" value="UER00133"/>
</dbReference>
<dbReference type="UniPathway" id="UPA00074">
    <property type="reaction ID" value="UER00135"/>
</dbReference>
<dbReference type="GO" id="GO:0005829">
    <property type="term" value="C:cytosol"/>
    <property type="evidence" value="ECO:0007669"/>
    <property type="project" value="TreeGrafter"/>
</dbReference>
<dbReference type="GO" id="GO:0003937">
    <property type="term" value="F:IMP cyclohydrolase activity"/>
    <property type="evidence" value="ECO:0007669"/>
    <property type="project" value="UniProtKB-UniRule"/>
</dbReference>
<dbReference type="GO" id="GO:0004643">
    <property type="term" value="F:phosphoribosylaminoimidazolecarboxamide formyltransferase activity"/>
    <property type="evidence" value="ECO:0007669"/>
    <property type="project" value="UniProtKB-UniRule"/>
</dbReference>
<dbReference type="GO" id="GO:0006189">
    <property type="term" value="P:'de novo' IMP biosynthetic process"/>
    <property type="evidence" value="ECO:0007669"/>
    <property type="project" value="UniProtKB-UniRule"/>
</dbReference>
<dbReference type="CDD" id="cd01421">
    <property type="entry name" value="IMPCH"/>
    <property type="match status" value="1"/>
</dbReference>
<dbReference type="FunFam" id="3.40.140.20:FF:000001">
    <property type="entry name" value="Bifunctional purine biosynthesis protein PurH"/>
    <property type="match status" value="1"/>
</dbReference>
<dbReference type="FunFam" id="3.40.50.1380:FF:000001">
    <property type="entry name" value="Bifunctional purine biosynthesis protein PurH"/>
    <property type="match status" value="1"/>
</dbReference>
<dbReference type="Gene3D" id="3.40.140.20">
    <property type="match status" value="2"/>
</dbReference>
<dbReference type="Gene3D" id="3.40.50.1380">
    <property type="entry name" value="Methylglyoxal synthase-like domain"/>
    <property type="match status" value="1"/>
</dbReference>
<dbReference type="HAMAP" id="MF_00139">
    <property type="entry name" value="PurH"/>
    <property type="match status" value="1"/>
</dbReference>
<dbReference type="InterPro" id="IPR024051">
    <property type="entry name" value="AICAR_Tfase_dup_dom_sf"/>
</dbReference>
<dbReference type="InterPro" id="IPR016193">
    <property type="entry name" value="Cytidine_deaminase-like"/>
</dbReference>
<dbReference type="InterPro" id="IPR011607">
    <property type="entry name" value="MGS-like_dom"/>
</dbReference>
<dbReference type="InterPro" id="IPR036914">
    <property type="entry name" value="MGS-like_dom_sf"/>
</dbReference>
<dbReference type="InterPro" id="IPR002695">
    <property type="entry name" value="PurH-like"/>
</dbReference>
<dbReference type="NCBIfam" id="NF002049">
    <property type="entry name" value="PRK00881.1"/>
    <property type="match status" value="1"/>
</dbReference>
<dbReference type="NCBIfam" id="TIGR00355">
    <property type="entry name" value="purH"/>
    <property type="match status" value="1"/>
</dbReference>
<dbReference type="PANTHER" id="PTHR11692:SF0">
    <property type="entry name" value="BIFUNCTIONAL PURINE BIOSYNTHESIS PROTEIN ATIC"/>
    <property type="match status" value="1"/>
</dbReference>
<dbReference type="PANTHER" id="PTHR11692">
    <property type="entry name" value="BIFUNCTIONAL PURINE BIOSYNTHESIS PROTEIN PURH"/>
    <property type="match status" value="1"/>
</dbReference>
<dbReference type="Pfam" id="PF01808">
    <property type="entry name" value="AICARFT_IMPCHas"/>
    <property type="match status" value="1"/>
</dbReference>
<dbReference type="Pfam" id="PF02142">
    <property type="entry name" value="MGS"/>
    <property type="match status" value="1"/>
</dbReference>
<dbReference type="PIRSF" id="PIRSF000414">
    <property type="entry name" value="AICARFT_IMPCHas"/>
    <property type="match status" value="1"/>
</dbReference>
<dbReference type="SMART" id="SM00798">
    <property type="entry name" value="AICARFT_IMPCHas"/>
    <property type="match status" value="1"/>
</dbReference>
<dbReference type="SMART" id="SM00851">
    <property type="entry name" value="MGS"/>
    <property type="match status" value="1"/>
</dbReference>
<dbReference type="SUPFAM" id="SSF53927">
    <property type="entry name" value="Cytidine deaminase-like"/>
    <property type="match status" value="1"/>
</dbReference>
<dbReference type="SUPFAM" id="SSF52335">
    <property type="entry name" value="Methylglyoxal synthase-like"/>
    <property type="match status" value="1"/>
</dbReference>
<dbReference type="PROSITE" id="PS51855">
    <property type="entry name" value="MGS"/>
    <property type="match status" value="1"/>
</dbReference>
<name>PUR9_CHLCH</name>
<organism>
    <name type="scientific">Chlorobium chlorochromatii (strain CaD3)</name>
    <dbReference type="NCBI Taxonomy" id="340177"/>
    <lineage>
        <taxon>Bacteria</taxon>
        <taxon>Pseudomonadati</taxon>
        <taxon>Chlorobiota</taxon>
        <taxon>Chlorobiia</taxon>
        <taxon>Chlorobiales</taxon>
        <taxon>Chlorobiaceae</taxon>
        <taxon>Chlorobium/Pelodictyon group</taxon>
        <taxon>Chlorobium</taxon>
    </lineage>
</organism>
<accession>Q3ATZ1</accession>
<sequence length="524" mass="56980">MSDPVIKRALVSVSDKTGIVDFCRELSELGVEIFSTGGTLKTLQDAGIAAASISTITGFPEIMDGRVKTLHPKIHGGLLAVRENANHVKQAADNGISFIDLVVVNLYPFEATVAKPNVSFEDAIENIDIGGPSMLRSAAKNNESVTVVTDSADYALVLQEMRANNGATTRATRLHLALKVFELTSRYDRAIATYLAGKVSAAEAAASTMSVQLAKELDMRYGENPHQNAGLYRLTDSNGTRSFEEFFEKLHGKELSYNNMLDIAAATSLIEEFRGEEPTVVIIKHTNPCGVAQASSLVDAWHRAFSTDTQAPFGGIVAFNRPLDMAAAQAVNEIFTEILIAPAFEDGVLELLMKKKDRRLVVQKKALPQSGWEFKSTPFGMLVQERDSKIVAKEDLKVVTKRQPTEAEIADLMFAWKICKHIKSNTILYVKNRQTYGVGAGQMSRVDSSKIARWKASEVNLDLHGSVVASDAFFPFADGLLAAAEAGVTAVIQPGGSIRDNEVIEAADANNLAMVFTGMRHFKH</sequence>